<protein>
    <recommendedName>
        <fullName evidence="1">Large ribosomal subunit protein uL24</fullName>
    </recommendedName>
    <alternativeName>
        <fullName evidence="3">50S ribosomal protein L24</fullName>
    </alternativeName>
</protein>
<accession>Q5JJF9</accession>
<reference key="1">
    <citation type="journal article" date="2005" name="Genome Res.">
        <title>Complete genome sequence of the hyperthermophilic archaeon Thermococcus kodakaraensis KOD1 and comparison with Pyrococcus genomes.</title>
        <authorList>
            <person name="Fukui T."/>
            <person name="Atomi H."/>
            <person name="Kanai T."/>
            <person name="Matsumi R."/>
            <person name="Fujiwara S."/>
            <person name="Imanaka T."/>
        </authorList>
    </citation>
    <scope>NUCLEOTIDE SEQUENCE [LARGE SCALE GENOMIC DNA]</scope>
    <source>
        <strain>ATCC BAA-918 / JCM 12380 / KOD1</strain>
    </source>
</reference>
<reference evidence="4 5 6" key="2">
    <citation type="journal article" date="2020" name="Nature">
        <title>Dynamic RNA acetylation revealed by quantitative cross-evolutionary mapping.</title>
        <authorList>
            <person name="Sas-Chen A."/>
            <person name="Thomas J.M."/>
            <person name="Matzov D."/>
            <person name="Taoka M."/>
            <person name="Nance K.D."/>
            <person name="Nir R."/>
            <person name="Bryson K.M."/>
            <person name="Shachar R."/>
            <person name="Liman G.L.S."/>
            <person name="Burkhart B.W."/>
            <person name="Gamage S.T."/>
            <person name="Nobe Y."/>
            <person name="Briney C.A."/>
            <person name="Levy M.J."/>
            <person name="Fuchs R.T."/>
            <person name="Robb G.B."/>
            <person name="Hartmann J."/>
            <person name="Sharma S."/>
            <person name="Lin Q."/>
            <person name="Florens L."/>
            <person name="Washburn M.P."/>
            <person name="Isobe T."/>
            <person name="Santangelo T.J."/>
            <person name="Shalev-Benami M."/>
            <person name="Meier J.L."/>
            <person name="Schwartz S."/>
        </authorList>
    </citation>
    <scope>STRUCTURE BY ELECTRON MICROSCOPY (2.55 ANGSTROMS) IN 70S RIBOSOME</scope>
    <scope>SUBUNIT</scope>
    <source>
        <strain>ATCC BAA-918 / TS559</strain>
    </source>
</reference>
<evidence type="ECO:0000255" key="1">
    <source>
        <dbReference type="HAMAP-Rule" id="MF_01326"/>
    </source>
</evidence>
<evidence type="ECO:0000269" key="2">
    <source>
    </source>
</evidence>
<evidence type="ECO:0000305" key="3"/>
<evidence type="ECO:0007744" key="4">
    <source>
        <dbReference type="PDB" id="6SKF"/>
    </source>
</evidence>
<evidence type="ECO:0007744" key="5">
    <source>
        <dbReference type="PDB" id="6SKG"/>
    </source>
</evidence>
<evidence type="ECO:0007744" key="6">
    <source>
        <dbReference type="PDB" id="6TH6"/>
    </source>
</evidence>
<name>RL24_THEKO</name>
<gene>
    <name evidence="1" type="primary">rpl24</name>
    <name type="ordered locus">TK1530</name>
</gene>
<proteinExistence type="evidence at protein level"/>
<feature type="chain" id="PRO_0000130780" description="Large ribosomal subunit protein uL24">
    <location>
        <begin position="1"/>
        <end position="121"/>
    </location>
</feature>
<comment type="function">
    <text evidence="1">One of two assembly initiator proteins, it binds directly to the 5'-end of the 23S rRNA, where it nucleates assembly of the 50S subunit.</text>
</comment>
<comment type="function">
    <text evidence="1">Located at the polypeptide exit tunnel on the outside of the subunit.</text>
</comment>
<comment type="subunit">
    <text evidence="1 2">Part of the 50S ribosomal subunit.</text>
</comment>
<comment type="similarity">
    <text evidence="1">Belongs to the universal ribosomal protein uL24 family.</text>
</comment>
<organism>
    <name type="scientific">Thermococcus kodakarensis (strain ATCC BAA-918 / JCM 12380 / KOD1)</name>
    <name type="common">Pyrococcus kodakaraensis (strain KOD1)</name>
    <dbReference type="NCBI Taxonomy" id="69014"/>
    <lineage>
        <taxon>Archaea</taxon>
        <taxon>Methanobacteriati</taxon>
        <taxon>Methanobacteriota</taxon>
        <taxon>Thermococci</taxon>
        <taxon>Thermococcales</taxon>
        <taxon>Thermococcaceae</taxon>
        <taxon>Thermococcus</taxon>
    </lineage>
</organism>
<sequence length="121" mass="14194">MKLDMKQPRKQRKFLYNAPLHLRGKIMSAPLSKELREKYGVRNLPIRVGDKVKVMRGDFKGVEGKVVEVDLRRYRIHVEGVTHKKTDGTEVFYPLHPSNVMIVELNLEDEKREKIIERRAA</sequence>
<keyword id="KW-0002">3D-structure</keyword>
<keyword id="KW-1185">Reference proteome</keyword>
<keyword id="KW-0687">Ribonucleoprotein</keyword>
<keyword id="KW-0689">Ribosomal protein</keyword>
<keyword id="KW-0694">RNA-binding</keyword>
<keyword id="KW-0699">rRNA-binding</keyword>
<dbReference type="EMBL" id="AP006878">
    <property type="protein sequence ID" value="BAD85719.1"/>
    <property type="molecule type" value="Genomic_DNA"/>
</dbReference>
<dbReference type="RefSeq" id="WP_011250481.1">
    <property type="nucleotide sequence ID" value="NC_006624.1"/>
</dbReference>
<dbReference type="PDB" id="6SKF">
    <property type="method" value="EM"/>
    <property type="resolution" value="2.95 A"/>
    <property type="chains" value="BX=1-121"/>
</dbReference>
<dbReference type="PDB" id="6SKG">
    <property type="method" value="EM"/>
    <property type="resolution" value="2.65 A"/>
    <property type="chains" value="BX=1-121"/>
</dbReference>
<dbReference type="PDB" id="6TH6">
    <property type="method" value="EM"/>
    <property type="resolution" value="2.55 A"/>
    <property type="chains" value="BX=1-121"/>
</dbReference>
<dbReference type="PDBsum" id="6SKF"/>
<dbReference type="PDBsum" id="6SKG"/>
<dbReference type="PDBsum" id="6TH6"/>
<dbReference type="EMDB" id="EMD-10223"/>
<dbReference type="EMDB" id="EMD-10224"/>
<dbReference type="EMDB" id="EMD-10503"/>
<dbReference type="SMR" id="Q5JJF9"/>
<dbReference type="FunCoup" id="Q5JJF9">
    <property type="interactions" value="171"/>
</dbReference>
<dbReference type="STRING" id="69014.TK1530"/>
<dbReference type="EnsemblBacteria" id="BAD85719">
    <property type="protein sequence ID" value="BAD85719"/>
    <property type="gene ID" value="TK1530"/>
</dbReference>
<dbReference type="GeneID" id="78448058"/>
<dbReference type="KEGG" id="tko:TK1530"/>
<dbReference type="PATRIC" id="fig|69014.16.peg.1490"/>
<dbReference type="eggNOG" id="arCOG04094">
    <property type="taxonomic scope" value="Archaea"/>
</dbReference>
<dbReference type="HOGENOM" id="CLU_093240_2_1_2"/>
<dbReference type="InParanoid" id="Q5JJF9"/>
<dbReference type="OrthoDB" id="10899at2157"/>
<dbReference type="PhylomeDB" id="Q5JJF9"/>
<dbReference type="Proteomes" id="UP000000536">
    <property type="component" value="Chromosome"/>
</dbReference>
<dbReference type="GO" id="GO:0022625">
    <property type="term" value="C:cytosolic large ribosomal subunit"/>
    <property type="evidence" value="ECO:0000318"/>
    <property type="project" value="GO_Central"/>
</dbReference>
<dbReference type="GO" id="GO:0003723">
    <property type="term" value="F:RNA binding"/>
    <property type="evidence" value="ECO:0000318"/>
    <property type="project" value="GO_Central"/>
</dbReference>
<dbReference type="GO" id="GO:0019843">
    <property type="term" value="F:rRNA binding"/>
    <property type="evidence" value="ECO:0007669"/>
    <property type="project" value="UniProtKB-UniRule"/>
</dbReference>
<dbReference type="GO" id="GO:0003735">
    <property type="term" value="F:structural constituent of ribosome"/>
    <property type="evidence" value="ECO:0000318"/>
    <property type="project" value="GO_Central"/>
</dbReference>
<dbReference type="GO" id="GO:0002181">
    <property type="term" value="P:cytoplasmic translation"/>
    <property type="evidence" value="ECO:0000318"/>
    <property type="project" value="GO_Central"/>
</dbReference>
<dbReference type="GO" id="GO:0042273">
    <property type="term" value="P:ribosomal large subunit biogenesis"/>
    <property type="evidence" value="ECO:0000318"/>
    <property type="project" value="GO_Central"/>
</dbReference>
<dbReference type="CDD" id="cd06089">
    <property type="entry name" value="KOW_RPL26"/>
    <property type="match status" value="1"/>
</dbReference>
<dbReference type="FunFam" id="2.30.30.30:FF:000009">
    <property type="entry name" value="60S ribosomal protein L26"/>
    <property type="match status" value="1"/>
</dbReference>
<dbReference type="Gene3D" id="2.30.30.30">
    <property type="match status" value="1"/>
</dbReference>
<dbReference type="HAMAP" id="MF_01326_A">
    <property type="entry name" value="Ribosomal_uL24_A"/>
    <property type="match status" value="1"/>
</dbReference>
<dbReference type="InterPro" id="IPR005824">
    <property type="entry name" value="KOW"/>
</dbReference>
<dbReference type="InterPro" id="IPR014722">
    <property type="entry name" value="Rib_uL2_dom2"/>
</dbReference>
<dbReference type="InterPro" id="IPR005825">
    <property type="entry name" value="Ribosomal_uL24_CS"/>
</dbReference>
<dbReference type="InterPro" id="IPR005756">
    <property type="entry name" value="Ribosomal_uL24_euk/arc"/>
</dbReference>
<dbReference type="InterPro" id="IPR041988">
    <property type="entry name" value="Ribosomal_uL24_KOW"/>
</dbReference>
<dbReference type="InterPro" id="IPR008991">
    <property type="entry name" value="Translation_prot_SH3-like_sf"/>
</dbReference>
<dbReference type="NCBIfam" id="TIGR01080">
    <property type="entry name" value="rplX_A_E"/>
    <property type="match status" value="1"/>
</dbReference>
<dbReference type="PANTHER" id="PTHR11143">
    <property type="entry name" value="60S RIBOSOMAL PROTEIN L26 FAMILY MEMBER"/>
    <property type="match status" value="1"/>
</dbReference>
<dbReference type="Pfam" id="PF00467">
    <property type="entry name" value="KOW"/>
    <property type="match status" value="1"/>
</dbReference>
<dbReference type="Pfam" id="PF16906">
    <property type="entry name" value="Ribosomal_L26"/>
    <property type="match status" value="1"/>
</dbReference>
<dbReference type="SMART" id="SM00739">
    <property type="entry name" value="KOW"/>
    <property type="match status" value="1"/>
</dbReference>
<dbReference type="SUPFAM" id="SSF50104">
    <property type="entry name" value="Translation proteins SH3-like domain"/>
    <property type="match status" value="1"/>
</dbReference>
<dbReference type="PROSITE" id="PS01108">
    <property type="entry name" value="RIBOSOMAL_L24"/>
    <property type="match status" value="1"/>
</dbReference>